<keyword id="KW-0997">Cell inner membrane</keyword>
<keyword id="KW-1003">Cell membrane</keyword>
<keyword id="KW-0472">Membrane</keyword>
<keyword id="KW-0520">NAD</keyword>
<keyword id="KW-0874">Quinone</keyword>
<keyword id="KW-1278">Translocase</keyword>
<keyword id="KW-0813">Transport</keyword>
<keyword id="KW-0830">Ubiquinone</keyword>
<comment type="function">
    <text evidence="1">NDH-1 shuttles electrons from NADH, via FMN and iron-sulfur (Fe-S) centers, to quinones in the respiratory chain. The immediate electron acceptor for the enzyme in this species is believed to be ubiquinone. Couples the redox reaction to proton translocation (for every two electrons transferred, four hydrogen ions are translocated across the cytoplasmic membrane), and thus conserves the redox energy in a proton gradient.</text>
</comment>
<comment type="catalytic activity">
    <reaction evidence="1">
        <text>a quinone + NADH + 5 H(+)(in) = a quinol + NAD(+) + 4 H(+)(out)</text>
        <dbReference type="Rhea" id="RHEA:57888"/>
        <dbReference type="ChEBI" id="CHEBI:15378"/>
        <dbReference type="ChEBI" id="CHEBI:24646"/>
        <dbReference type="ChEBI" id="CHEBI:57540"/>
        <dbReference type="ChEBI" id="CHEBI:57945"/>
        <dbReference type="ChEBI" id="CHEBI:132124"/>
    </reaction>
</comment>
<comment type="subunit">
    <text evidence="1">NDH-1 is composed of 14 different subunits. Subunits NuoB, C, D, E, F, and G constitute the peripheral sector of the complex.</text>
</comment>
<comment type="subcellular location">
    <subcellularLocation>
        <location evidence="1">Cell inner membrane</location>
        <topology evidence="1">Peripheral membrane protein</topology>
        <orientation evidence="1">Cytoplasmic side</orientation>
    </subcellularLocation>
</comment>
<comment type="similarity">
    <text evidence="1">Belongs to the complex I 30 kDa subunit family.</text>
</comment>
<name>NUOC_LEGPL</name>
<accession>Q5WT22</accession>
<feature type="chain" id="PRO_0000358116" description="NADH-quinone oxidoreductase subunit C">
    <location>
        <begin position="1"/>
        <end position="227"/>
    </location>
</feature>
<organism>
    <name type="scientific">Legionella pneumophila (strain Lens)</name>
    <dbReference type="NCBI Taxonomy" id="297245"/>
    <lineage>
        <taxon>Bacteria</taxon>
        <taxon>Pseudomonadati</taxon>
        <taxon>Pseudomonadota</taxon>
        <taxon>Gammaproteobacteria</taxon>
        <taxon>Legionellales</taxon>
        <taxon>Legionellaceae</taxon>
        <taxon>Legionella</taxon>
    </lineage>
</organism>
<evidence type="ECO:0000255" key="1">
    <source>
        <dbReference type="HAMAP-Rule" id="MF_01357"/>
    </source>
</evidence>
<dbReference type="EC" id="7.1.1.-" evidence="1"/>
<dbReference type="EMBL" id="CR628337">
    <property type="protein sequence ID" value="CAH16944.1"/>
    <property type="molecule type" value="Genomic_DNA"/>
</dbReference>
<dbReference type="RefSeq" id="WP_011216632.1">
    <property type="nucleotide sequence ID" value="NC_006369.1"/>
</dbReference>
<dbReference type="SMR" id="Q5WT22"/>
<dbReference type="KEGG" id="lpf:lpl2703"/>
<dbReference type="LegioList" id="lpl2703"/>
<dbReference type="HOGENOM" id="CLU_042628_2_1_6"/>
<dbReference type="Proteomes" id="UP000002517">
    <property type="component" value="Chromosome"/>
</dbReference>
<dbReference type="GO" id="GO:0005886">
    <property type="term" value="C:plasma membrane"/>
    <property type="evidence" value="ECO:0007669"/>
    <property type="project" value="UniProtKB-SubCell"/>
</dbReference>
<dbReference type="GO" id="GO:0008137">
    <property type="term" value="F:NADH dehydrogenase (ubiquinone) activity"/>
    <property type="evidence" value="ECO:0007669"/>
    <property type="project" value="InterPro"/>
</dbReference>
<dbReference type="GO" id="GO:0050136">
    <property type="term" value="F:NADH:ubiquinone reductase (non-electrogenic) activity"/>
    <property type="evidence" value="ECO:0007669"/>
    <property type="project" value="UniProtKB-UniRule"/>
</dbReference>
<dbReference type="GO" id="GO:0048038">
    <property type="term" value="F:quinone binding"/>
    <property type="evidence" value="ECO:0007669"/>
    <property type="project" value="UniProtKB-KW"/>
</dbReference>
<dbReference type="Gene3D" id="3.30.460.80">
    <property type="entry name" value="NADH:ubiquinone oxidoreductase, 30kDa subunit"/>
    <property type="match status" value="1"/>
</dbReference>
<dbReference type="HAMAP" id="MF_01357">
    <property type="entry name" value="NDH1_NuoC"/>
    <property type="match status" value="1"/>
</dbReference>
<dbReference type="InterPro" id="IPR010218">
    <property type="entry name" value="NADH_DH_suC"/>
</dbReference>
<dbReference type="InterPro" id="IPR037232">
    <property type="entry name" value="NADH_quin_OxRdtase_su_C/D-like"/>
</dbReference>
<dbReference type="InterPro" id="IPR001268">
    <property type="entry name" value="NADH_UbQ_OxRdtase_30kDa_su"/>
</dbReference>
<dbReference type="InterPro" id="IPR020396">
    <property type="entry name" value="NADH_UbQ_OxRdtase_CS"/>
</dbReference>
<dbReference type="NCBIfam" id="TIGR01961">
    <property type="entry name" value="NuoC_fam"/>
    <property type="match status" value="1"/>
</dbReference>
<dbReference type="NCBIfam" id="NF004730">
    <property type="entry name" value="PRK06074.1-1"/>
    <property type="match status" value="1"/>
</dbReference>
<dbReference type="PANTHER" id="PTHR10884:SF14">
    <property type="entry name" value="NADH DEHYDROGENASE [UBIQUINONE] IRON-SULFUR PROTEIN 3, MITOCHONDRIAL"/>
    <property type="match status" value="1"/>
</dbReference>
<dbReference type="PANTHER" id="PTHR10884">
    <property type="entry name" value="NADH DEHYDROGENASE UBIQUINONE IRON-SULFUR PROTEIN 3"/>
    <property type="match status" value="1"/>
</dbReference>
<dbReference type="Pfam" id="PF00329">
    <property type="entry name" value="Complex1_30kDa"/>
    <property type="match status" value="1"/>
</dbReference>
<dbReference type="SUPFAM" id="SSF143243">
    <property type="entry name" value="Nqo5-like"/>
    <property type="match status" value="1"/>
</dbReference>
<dbReference type="PROSITE" id="PS00542">
    <property type="entry name" value="COMPLEX1_30K"/>
    <property type="match status" value="1"/>
</dbReference>
<proteinExistence type="inferred from homology"/>
<protein>
    <recommendedName>
        <fullName evidence="1">NADH-quinone oxidoreductase subunit C</fullName>
        <ecNumber evidence="1">7.1.1.-</ecNumber>
    </recommendedName>
    <alternativeName>
        <fullName evidence="1">NADH dehydrogenase I subunit C</fullName>
    </alternativeName>
    <alternativeName>
        <fullName evidence="1">NDH-1 subunit C</fullName>
    </alternativeName>
</protein>
<gene>
    <name evidence="1" type="primary">nuoC</name>
    <name type="ordered locus">lpl2703</name>
</gene>
<sequence>MTKNEYLIEKLQVDLANHITELTSAYGEVTIECEVQNLLPVMIELRDREEFSFDELIDLCGVDYLHYGDYDWETESATEHGFSRGVERQEAKAYAVNKPRFAVVYHLLSTKKNHRLRVKLFVEESHLIVPSVHHLWKSANWFEREAYDLYGILFDGHPDLRRLLTDYGFIGHPFRKDFPLSGEVEMRYDAKLQKVIYAPVDIVPRIVVPKVIRNDNRYIGNEGSKND</sequence>
<reference key="1">
    <citation type="journal article" date="2004" name="Nat. Genet.">
        <title>Evidence in the Legionella pneumophila genome for exploitation of host cell functions and high genome plasticity.</title>
        <authorList>
            <person name="Cazalet C."/>
            <person name="Rusniok C."/>
            <person name="Brueggemann H."/>
            <person name="Zidane N."/>
            <person name="Magnier A."/>
            <person name="Ma L."/>
            <person name="Tichit M."/>
            <person name="Jarraud S."/>
            <person name="Bouchier C."/>
            <person name="Vandenesch F."/>
            <person name="Kunst F."/>
            <person name="Etienne J."/>
            <person name="Glaser P."/>
            <person name="Buchrieser C."/>
        </authorList>
    </citation>
    <scope>NUCLEOTIDE SEQUENCE [LARGE SCALE GENOMIC DNA]</scope>
    <source>
        <strain>Lens</strain>
    </source>
</reference>